<keyword id="KW-0002">3D-structure</keyword>
<keyword id="KW-0963">Cytoplasm</keyword>
<keyword id="KW-0903">Direct protein sequencing</keyword>
<keyword id="KW-0460">Magnesium</keyword>
<keyword id="KW-0479">Metal-binding</keyword>
<keyword id="KW-0548">Nucleotidyltransferase</keyword>
<keyword id="KW-1185">Reference proteome</keyword>
<keyword id="KW-0694">RNA-binding</keyword>
<keyword id="KW-0346">Stress response</keyword>
<keyword id="KW-0808">Transferase</keyword>
<gene>
    <name evidence="1" type="primary">pnp</name>
    <name type="ordered locus">b3164</name>
    <name type="ordered locus">JW5851</name>
</gene>
<reference key="1">
    <citation type="journal article" date="1987" name="J. Biol. Chem.">
        <title>Nucleotide sequence of the pnp gene of Escherichia coli encoding polynucleotide phosphorylase. Homology of the primary structure of the protein with the RNA-binding domain of ribosomal protein S1.</title>
        <authorList>
            <person name="Regnier P."/>
            <person name="Grunberg-Manago M."/>
            <person name="Portier C."/>
        </authorList>
    </citation>
    <scope>NUCLEOTIDE SEQUENCE [GENOMIC DNA]</scope>
</reference>
<reference key="2">
    <citation type="journal article" date="1997" name="Science">
        <title>The complete genome sequence of Escherichia coli K-12.</title>
        <authorList>
            <person name="Blattner F.R."/>
            <person name="Plunkett G. III"/>
            <person name="Bloch C.A."/>
            <person name="Perna N.T."/>
            <person name="Burland V."/>
            <person name="Riley M."/>
            <person name="Collado-Vides J."/>
            <person name="Glasner J.D."/>
            <person name="Rode C.K."/>
            <person name="Mayhew G.F."/>
            <person name="Gregor J."/>
            <person name="Davis N.W."/>
            <person name="Kirkpatrick H.A."/>
            <person name="Goeden M.A."/>
            <person name="Rose D.J."/>
            <person name="Mau B."/>
            <person name="Shao Y."/>
        </authorList>
    </citation>
    <scope>NUCLEOTIDE SEQUENCE [LARGE SCALE GENOMIC DNA]</scope>
    <source>
        <strain>K12 / MG1655 / ATCC 47076</strain>
    </source>
</reference>
<reference key="3">
    <citation type="journal article" date="2006" name="Mol. Syst. Biol.">
        <title>Highly accurate genome sequences of Escherichia coli K-12 strains MG1655 and W3110.</title>
        <authorList>
            <person name="Hayashi K."/>
            <person name="Morooka N."/>
            <person name="Yamamoto Y."/>
            <person name="Fujita K."/>
            <person name="Isono K."/>
            <person name="Choi S."/>
            <person name="Ohtsubo E."/>
            <person name="Baba T."/>
            <person name="Wanner B.L."/>
            <person name="Mori H."/>
            <person name="Horiuchi T."/>
        </authorList>
    </citation>
    <scope>NUCLEOTIDE SEQUENCE [LARGE SCALE GENOMIC DNA]</scope>
    <source>
        <strain>K12 / W3110 / ATCC 27325 / DSM 5911</strain>
    </source>
</reference>
<reference key="4">
    <citation type="journal article" date="1984" name="Nucleic Acids Res.">
        <title>Expression of the rpsO and pnp genes: structural analysis of a DNA fragment carrying their control regions.</title>
        <authorList>
            <person name="Portier C."/>
            <person name="Regnier P."/>
        </authorList>
    </citation>
    <scope>NUCLEOTIDE SEQUENCE [GENOMIC DNA] OF 1-196</scope>
</reference>
<reference key="5">
    <citation type="journal article" date="1985" name="Gene">
        <title>Promoter activity and transcript mapping in the regulatory region for genes encoding ribosomal protein S15 and polynucleotide phosphorylase of Escherichia coli.</title>
        <authorList>
            <person name="Evans S."/>
            <person name="Dennis P.P."/>
        </authorList>
    </citation>
    <scope>NUCLEOTIDE SEQUENCE [GENOMIC DNA] OF 1-62</scope>
</reference>
<reference key="6">
    <citation type="journal article" date="1997" name="Electrophoresis">
        <title>Comparing the predicted and observed properties of proteins encoded in the genome of Escherichia coli K-12.</title>
        <authorList>
            <person name="Link A.J."/>
            <person name="Robison K."/>
            <person name="Church G.M."/>
        </authorList>
    </citation>
    <scope>PROTEIN SEQUENCE OF 1-12</scope>
    <source>
        <strain>K12 / EMG2</strain>
    </source>
</reference>
<reference key="7">
    <citation type="journal article" date="1968" name="J. Biol. Chem.">
        <title>Purification and properties of polynucleotide phosphorylase from Escherichia coli.</title>
        <authorList>
            <person name="Kimhi Y."/>
            <person name="Littauer U.Z."/>
        </authorList>
    </citation>
    <scope>FUNCTION</scope>
    <scope>CATALYTIC ACTIVITY</scope>
</reference>
<reference key="8">
    <citation type="journal article" date="1975" name="FEBS Lett.">
        <title>Quaternary structure of Escherichia coli polynucleotide phosphorylase: new evidence for a trimeric structure.</title>
        <authorList>
            <person name="Portier C."/>
        </authorList>
    </citation>
    <scope>SUBUNIT</scope>
</reference>
<reference key="9">
    <citation type="journal article" date="1992" name="EMBO J.">
        <title>E.coli polynucleotide phosphorylase expression is autoregulated through an RNase III-dependent mechanism.</title>
        <authorList>
            <person name="Robert-Le Meur M."/>
            <person name="Portier C."/>
        </authorList>
    </citation>
    <scope>INDUCTION</scope>
</reference>
<reference key="10">
    <citation type="journal article" date="1994" name="J. Biol. Chem.">
        <title>The role of individual exoribonucleases in processing at the 3' end of Escherichia coli tRNA precursors.</title>
        <authorList>
            <person name="Li Z."/>
            <person name="Deutscher M.P."/>
        </authorList>
    </citation>
    <scope>FUNCTION IN TRNA PROCESSING</scope>
</reference>
<reference key="11">
    <citation type="journal article" date="1996" name="Mol. Microbiol.">
        <title>RbfA, a 30S ribosomal binding factor, is a cold-shock protein whose absence triggers the cold-shock response.</title>
        <authorList>
            <person name="Jones P.G."/>
            <person name="Inouye M."/>
        </authorList>
    </citation>
    <scope>INDUCTION BY COLD-SHOCK</scope>
    <source>
        <strain>CSH142</strain>
    </source>
</reference>
<reference key="12">
    <citation type="journal article" date="1997" name="Electrophoresis">
        <title>Escherichia coli proteome analysis using the gene-protein database.</title>
        <authorList>
            <person name="VanBogelen R.A."/>
            <person name="Abshire K.Z."/>
            <person name="Moldover B."/>
            <person name="Olson E.R."/>
            <person name="Neidhardt F.C."/>
        </authorList>
    </citation>
    <scope>IDENTIFICATION BY 2D-GEL</scope>
</reference>
<reference key="13">
    <citation type="journal article" date="1998" name="Genes Dev.">
        <title>Ribonuclease E organizes the protein interactions in the Escherichia coli RNA degradosome.</title>
        <authorList>
            <person name="Vanzo N.F."/>
            <person name="Li Y.S."/>
            <person name="Py B."/>
            <person name="Blum E."/>
            <person name="Higgins C.F."/>
            <person name="Raynal L.C."/>
            <person name="Krisch H.M."/>
            <person name="Carpousis A.J."/>
        </authorList>
    </citation>
    <scope>INTERACTION WITH RNE</scope>
</reference>
<reference key="14">
    <citation type="journal article" date="2001" name="J. Bacteriol.">
        <title>Increased expression of Escherichia coli polynucleotide phosphorylase at low temperatures is linked to a decrease in the efficiency of autocontrol.</title>
        <authorList>
            <person name="Mathy N."/>
            <person name="Jarrige A.C."/>
            <person name="Robert-Le Meur M."/>
            <person name="Portier C."/>
        </authorList>
    </citation>
    <scope>INDUCTION</scope>
</reference>
<reference key="15">
    <citation type="journal article" date="2002" name="J. Mol. Biol.">
        <title>Mutational analysis of polynucleotide phosphorylase from Escherichia coli.</title>
        <authorList>
            <person name="Jarrige A."/>
            <person name="Brechemier-Baey D."/>
            <person name="Mathy N."/>
            <person name="Duche O."/>
            <person name="Portier C."/>
        </authorList>
    </citation>
    <scope>CATALYTIC ACTIVITY</scope>
    <scope>FUNCTION</scope>
    <scope>MUTAGENESIS OF ARG-100; ARG-319; VAL-428; CYS-444 AND ASP-492</scope>
</reference>
<reference key="16">
    <citation type="journal article" date="2004" name="Mol. Microbiol.">
        <title>Physical and functional interactions among RNase E, polynucleotide phosphorylase and the cold-shock protein, CsdA: evidence for a 'cold shock degradosome'.</title>
        <authorList>
            <person name="Prud'homme-Genereux A."/>
            <person name="Beran R.K."/>
            <person name="Iost I."/>
            <person name="Ramey C.S."/>
            <person name="Mackie G.A."/>
            <person name="Simons R.W."/>
        </authorList>
    </citation>
    <scope>INTERACTION WITH RNE</scope>
    <scope>ASSOCIATION WITH RNA DEGRADOSOME</scope>
    <source>
        <strain>CF881</strain>
    </source>
</reference>
<reference key="17">
    <citation type="journal article" date="2005" name="J. Biol. Chem.">
        <title>Protein complexes of the Escherichia coli cell envelope.</title>
        <authorList>
            <person name="Stenberg F."/>
            <person name="Chovanec P."/>
            <person name="Maslen S.L."/>
            <person name="Robinson C.V."/>
            <person name="Ilag L."/>
            <person name="von Heijne G."/>
            <person name="Daley D.O."/>
        </authorList>
    </citation>
    <scope>SUBCELLULAR LOCATION</scope>
    <source>
        <strain>BL21-DE3</strain>
    </source>
</reference>
<reference key="18">
    <citation type="journal article" date="2008" name="J. Biol. Chem.">
        <title>RNaseE and RNA helicase B play central roles in the cytoskeletal organization of the RNA degradosome.</title>
        <authorList>
            <person name="Taghbalout A."/>
            <person name="Rothfield L."/>
        </authorList>
    </citation>
    <scope>INTERACTION WITH RNE AND RHLB</scope>
</reference>
<reference key="19">
    <citation type="journal article" date="2011" name="RNA">
        <title>Degradation of ribosomal RNA during starvation: comparison to quality control during steady-state growth and a role for RNase PH.</title>
        <authorList>
            <person name="Basturea G.N."/>
            <person name="Zundel M.A."/>
            <person name="Deutscher M.P."/>
        </authorList>
    </citation>
    <scope>FUNCTION IN RIBOSOME DEGRADATION DURING QUALITY CONTROL</scope>
    <source>
        <strain>K12 / MG1655(Seq)*</strain>
    </source>
</reference>
<reference key="20">
    <citation type="journal article" date="2021" name="Proc. Natl. Acad. Sci. U.S.A.">
        <title>A fluorescence-based genetic screen reveals diverse mechanisms silencing small RNA signaling in E. coli.</title>
        <authorList>
            <person name="Chen J."/>
            <person name="To L."/>
            <person name="de Mets F."/>
            <person name="Luo X."/>
            <person name="Majdalani N."/>
            <person name="Tai C.H."/>
            <person name="Gottesman S."/>
        </authorList>
    </citation>
    <scope>FUNCTION</scope>
    <scope>SUBUNIT</scope>
    <scope>DISRUPTION PHENOTYPE</scope>
    <source>
        <strain>K12 / MG1655 / ATCC 47076</strain>
    </source>
</reference>
<reference key="21">
    <citation type="journal article" date="1997" name="Cell">
        <title>The solution structure of the S1 RNA binding domain: a member of an ancient nucleic acid-binding fold.</title>
        <authorList>
            <person name="Bycroft M."/>
            <person name="Hubbard T.J."/>
            <person name="Proctor M."/>
            <person name="Freund S.M."/>
            <person name="Murzin A.G."/>
        </authorList>
    </citation>
    <scope>STRUCTURE BY NMR OF 617-692</scope>
</reference>
<reference key="22">
    <citation type="journal article" date="2008" name="RNA">
        <title>Crystal structure of Escherichia coli PNPase: central channel residues are involved in processive RNA degradation.</title>
        <authorList>
            <person name="Shi Z."/>
            <person name="Yang W.Z."/>
            <person name="Lin-Chao S."/>
            <person name="Chak K.F."/>
            <person name="Yuan H.S."/>
        </authorList>
    </citation>
    <scope>X-RAY CRYSTALLOGRAPHY (2.6 ANGSTROMS)</scope>
    <scope>FUNCTION</scope>
    <scope>CATALYTIC ACTIVITY</scope>
    <scope>SUBUNIT</scope>
    <scope>RNA-BINDING</scope>
    <scope>DOMAIN</scope>
    <scope>MUTAGENESIS OF 79-ARG-ARG-80 AND ARG-83</scope>
</reference>
<reference key="23">
    <citation type="journal article" date="2009" name="J. Mol. Biol.">
        <title>Crystal structure of Escherichia coli polynucleotide phosphorylase core bound to RNase E, RNA and manganese: implications for catalytic mechanism and RNA degradosome assembly.</title>
        <authorList>
            <person name="Nurmohamed S."/>
            <person name="Vaidialingam B."/>
            <person name="Callaghan A.J."/>
            <person name="Luisi B.F."/>
        </authorList>
    </citation>
    <scope>X-RAY CRYSTALLOGRAPHY (2.4 ANGSTROMS) OF 1-549 IN COMPLEXES WITH RNASE E; RNA AND MANGANESE IONS</scope>
    <scope>FUNCTION</scope>
    <scope>COFACTOR</scope>
    <scope>SUBUNIT</scope>
</reference>
<name>PNP_ECOLI</name>
<accession>P05055</accession>
<accession>P78109</accession>
<accession>Q2M946</accession>
<sequence>MLNPIVRKFQYGQHTVTLETGMMARQATAAVMVSMDDTAVFVTVVGQKKAKPGQDFFPLTVNYQERTYAAGRIPGSFFRREGRPSEGETLIARLIDRPIRPLFPEGFVNEVQVIATVVSVNPQVNPDIVAMIGASAALSLSGIPFNGPIGAARVGYINDQYVLNPTQDELKESKLDLVVAGTEAAVLMVESEAQLLSEDQMLGAVVFGHEQQQVVIQNINELVKEAGKPRWDWQPEPVNEALNARVAALAEARLSDAYRITDKQERYAQVDVIKSETIATLLAEDETLDENELGEILHAIEKNVVRSRVLAGEPRIDGREKDMIRGLDVRTGVLPRTHGSALFTRGETQALVTATLGTARDAQVLDELMGERTDTFLFHYNFPPYSVGETGMVGSPKRREIGHGRLAKRGVLAVMPDMDKFPYTVRVVSEITESNGSSSMASVCGASLALMDAGVPIKAAVAGIAMGLVKEGDNYVVLSDILGDEDHLGDMDFKVAGSRDGISALQMDIKIEGITKEIMQVALNQAKGARLHILGVMEQAINAPRGDISEFAPRIHTIKINPDKIKDVIGKGGSVIRALTEETGTTIEIEDDGTVKIAATDGEKAKHAIRRIEEITAEIEVGRVYTGKVTRIVDFGAFVAIGGGKEGLVHISQIADKRVEKVTDYLQMGQEVPVKVLEVDRQGRIRLSIKEATEQSQPAAAPEAPAAEQGE</sequence>
<feature type="chain" id="PRO_0000197913" description="Polyribonucleotide nucleotidyltransferase">
    <location>
        <begin position="1"/>
        <end position="711"/>
    </location>
</feature>
<feature type="domain" description="KH" evidence="1">
    <location>
        <begin position="553"/>
        <end position="612"/>
    </location>
</feature>
<feature type="domain" description="S1 motif" evidence="1">
    <location>
        <begin position="622"/>
        <end position="690"/>
    </location>
</feature>
<feature type="region of interest" description="FFRR loop; important for RNA binding" evidence="19">
    <location>
        <begin position="77"/>
        <end position="80"/>
    </location>
</feature>
<feature type="region of interest" description="Interaction with RNase E" evidence="19">
    <location>
        <begin position="327"/>
        <end position="331"/>
    </location>
</feature>
<feature type="region of interest" description="Disordered" evidence="2">
    <location>
        <begin position="689"/>
        <end position="711"/>
    </location>
</feature>
<feature type="compositionally biased region" description="Low complexity" evidence="2">
    <location>
        <begin position="694"/>
        <end position="711"/>
    </location>
</feature>
<feature type="binding site" evidence="19">
    <location>
        <position position="486"/>
    </location>
    <ligand>
        <name>Mg(2+)</name>
        <dbReference type="ChEBI" id="CHEBI:18420"/>
    </ligand>
</feature>
<feature type="binding site" evidence="19">
    <location>
        <position position="492"/>
    </location>
    <ligand>
        <name>Mg(2+)</name>
        <dbReference type="ChEBI" id="CHEBI:18420"/>
    </ligand>
</feature>
<feature type="mutagenesis site" description="Strongly reduces RNA binding. Reduces RNA degradation." evidence="10">
    <original>RR</original>
    <variation>AA</variation>
    <location>
        <begin position="79"/>
        <end position="80"/>
    </location>
</feature>
<feature type="mutagenesis site" description="No effect on RNA-binding. No effect on degradation of long RNA molecules. Impairs degradation of short RNA molecules." evidence="10">
    <original>R</original>
    <variation>A</variation>
    <location>
        <position position="83"/>
    </location>
</feature>
<feature type="mutagenesis site" description="Abolishes enzyme activity." evidence="5">
    <original>R</original>
    <variation>D</variation>
    <location>
        <position position="100"/>
    </location>
</feature>
<feature type="mutagenesis site" description="Abolishes enzyme activity." evidence="5">
    <original>R</original>
    <variation>A</variation>
    <location>
        <position position="319"/>
    </location>
</feature>
<feature type="mutagenesis site" description="Abolishes enzyme activity.">
    <original>RR</original>
    <variation>DD</variation>
    <location>
        <begin position="398"/>
        <end position="399"/>
    </location>
</feature>
<feature type="mutagenesis site" description="Abolishes enzyme activity." evidence="5">
    <original>V</original>
    <variation>P</variation>
    <location>
        <position position="428"/>
    </location>
</feature>
<feature type="mutagenesis site" description="Abolishes enzyme activity." evidence="5">
    <original>C</original>
    <variation>W</variation>
    <location>
        <position position="444"/>
    </location>
</feature>
<feature type="mutagenesis site" description="Abolishes enzyme activity." evidence="5">
    <original>D</original>
    <variation>G</variation>
    <location>
        <position position="492"/>
    </location>
</feature>
<feature type="sequence conflict" description="In Ref. 1; AAA83905." evidence="18" ref="1">
    <original>G</original>
    <variation>R</variation>
    <location>
        <position position="357"/>
    </location>
</feature>
<feature type="sequence conflict" description="In Ref. 1; AAA83905." evidence="18" ref="1">
    <original>L</original>
    <variation>S</variation>
    <location>
        <position position="450"/>
    </location>
</feature>
<feature type="strand" evidence="21">
    <location>
        <begin position="5"/>
        <end position="11"/>
    </location>
</feature>
<feature type="strand" evidence="21">
    <location>
        <begin position="14"/>
        <end position="23"/>
    </location>
</feature>
<feature type="strand" evidence="21">
    <location>
        <begin position="27"/>
        <end position="35"/>
    </location>
</feature>
<feature type="strand" evidence="21">
    <location>
        <begin position="38"/>
        <end position="46"/>
    </location>
</feature>
<feature type="strand" evidence="21">
    <location>
        <begin position="59"/>
        <end position="65"/>
    </location>
</feature>
<feature type="helix" evidence="21">
    <location>
        <begin position="67"/>
        <end position="70"/>
    </location>
</feature>
<feature type="turn" evidence="25">
    <location>
        <begin position="79"/>
        <end position="81"/>
    </location>
</feature>
<feature type="helix" evidence="21">
    <location>
        <begin position="86"/>
        <end position="99"/>
    </location>
</feature>
<feature type="helix" evidence="21">
    <location>
        <begin position="100"/>
        <end position="102"/>
    </location>
</feature>
<feature type="strand" evidence="21">
    <location>
        <begin position="111"/>
        <end position="119"/>
    </location>
</feature>
<feature type="helix" evidence="21">
    <location>
        <begin position="126"/>
        <end position="141"/>
    </location>
</feature>
<feature type="strand" evidence="21">
    <location>
        <begin position="152"/>
        <end position="157"/>
    </location>
</feature>
<feature type="strand" evidence="21">
    <location>
        <begin position="160"/>
        <end position="164"/>
    </location>
</feature>
<feature type="helix" evidence="21">
    <location>
        <begin position="169"/>
        <end position="172"/>
    </location>
</feature>
<feature type="strand" evidence="21">
    <location>
        <begin position="174"/>
        <end position="181"/>
    </location>
</feature>
<feature type="strand" evidence="21">
    <location>
        <begin position="186"/>
        <end position="196"/>
    </location>
</feature>
<feature type="helix" evidence="21">
    <location>
        <begin position="198"/>
        <end position="211"/>
    </location>
</feature>
<feature type="helix" evidence="21">
    <location>
        <begin position="213"/>
        <end position="225"/>
    </location>
</feature>
<feature type="helix" evidence="21">
    <location>
        <begin position="242"/>
        <end position="244"/>
    </location>
</feature>
<feature type="turn" evidence="21">
    <location>
        <begin position="247"/>
        <end position="250"/>
    </location>
</feature>
<feature type="helix" evidence="21">
    <location>
        <begin position="251"/>
        <end position="257"/>
    </location>
</feature>
<feature type="helix" evidence="21">
    <location>
        <begin position="263"/>
        <end position="284"/>
    </location>
</feature>
<feature type="helix" evidence="21">
    <location>
        <begin position="290"/>
        <end position="311"/>
    </location>
</feature>
<feature type="turn" evidence="22">
    <location>
        <begin position="315"/>
        <end position="318"/>
    </location>
</feature>
<feature type="strand" evidence="21">
    <location>
        <begin position="327"/>
        <end position="332"/>
    </location>
</feature>
<feature type="strand" evidence="21">
    <location>
        <begin position="337"/>
        <end position="345"/>
    </location>
</feature>
<feature type="strand" evidence="21">
    <location>
        <begin position="348"/>
        <end position="356"/>
    </location>
</feature>
<feature type="helix" evidence="26">
    <location>
        <begin position="359"/>
        <end position="361"/>
    </location>
</feature>
<feature type="strand" evidence="26">
    <location>
        <begin position="362"/>
        <end position="366"/>
    </location>
</feature>
<feature type="strand" evidence="27">
    <location>
        <begin position="371"/>
        <end position="374"/>
    </location>
</feature>
<feature type="strand" evidence="21">
    <location>
        <begin position="375"/>
        <end position="381"/>
    </location>
</feature>
<feature type="helix" evidence="21">
    <location>
        <begin position="384"/>
        <end position="387"/>
    </location>
</feature>
<feature type="helix" evidence="21">
    <location>
        <begin position="402"/>
        <end position="412"/>
    </location>
</feature>
<feature type="strand" evidence="21">
    <location>
        <begin position="418"/>
        <end position="421"/>
    </location>
</feature>
<feature type="strand" evidence="21">
    <location>
        <begin position="425"/>
        <end position="433"/>
    </location>
</feature>
<feature type="helix" evidence="21">
    <location>
        <begin position="438"/>
        <end position="452"/>
    </location>
</feature>
<feature type="strand" evidence="21">
    <location>
        <begin position="462"/>
        <end position="471"/>
    </location>
</feature>
<feature type="strand" evidence="21">
    <location>
        <begin position="474"/>
        <end position="480"/>
    </location>
</feature>
<feature type="helix" evidence="21">
    <location>
        <begin position="483"/>
        <end position="488"/>
    </location>
</feature>
<feature type="strand" evidence="21">
    <location>
        <begin position="490"/>
        <end position="497"/>
    </location>
</feature>
<feature type="strand" evidence="21">
    <location>
        <begin position="502"/>
        <end position="509"/>
    </location>
</feature>
<feature type="helix" evidence="21">
    <location>
        <begin position="516"/>
        <end position="540"/>
    </location>
</feature>
<feature type="strand" evidence="26">
    <location>
        <begin position="554"/>
        <end position="559"/>
    </location>
</feature>
<feature type="helix" evidence="26">
    <location>
        <begin position="562"/>
        <end position="564"/>
    </location>
</feature>
<feature type="helix" evidence="26">
    <location>
        <begin position="565"/>
        <end position="569"/>
    </location>
</feature>
<feature type="helix" evidence="26">
    <location>
        <begin position="571"/>
        <end position="573"/>
    </location>
</feature>
<feature type="helix" evidence="26">
    <location>
        <begin position="574"/>
        <end position="583"/>
    </location>
</feature>
<feature type="strand" evidence="26">
    <location>
        <begin position="585"/>
        <end position="589"/>
    </location>
</feature>
<feature type="turn" evidence="23">
    <location>
        <begin position="591"/>
        <end position="593"/>
    </location>
</feature>
<feature type="strand" evidence="26">
    <location>
        <begin position="594"/>
        <end position="601"/>
    </location>
</feature>
<feature type="helix" evidence="26">
    <location>
        <begin position="602"/>
        <end position="614"/>
    </location>
</feature>
<feature type="strand" evidence="26">
    <location>
        <begin position="629"/>
        <end position="633"/>
    </location>
</feature>
<feature type="strand" evidence="26">
    <location>
        <begin position="636"/>
        <end position="639"/>
    </location>
</feature>
<feature type="strand" evidence="26">
    <location>
        <begin position="642"/>
        <end position="644"/>
    </location>
</feature>
<feature type="strand" evidence="24">
    <location>
        <begin position="647"/>
        <end position="650"/>
    </location>
</feature>
<feature type="helix" evidence="24">
    <location>
        <begin position="651"/>
        <end position="653"/>
    </location>
</feature>
<feature type="strand" evidence="26">
    <location>
        <begin position="654"/>
        <end position="657"/>
    </location>
</feature>
<feature type="helix" evidence="26">
    <location>
        <begin position="662"/>
        <end position="664"/>
    </location>
</feature>
<feature type="strand" evidence="24">
    <location>
        <begin position="671"/>
        <end position="679"/>
    </location>
</feature>
<feature type="helix" evidence="25">
    <location>
        <begin position="681"/>
        <end position="683"/>
    </location>
</feature>
<feature type="strand" evidence="24">
    <location>
        <begin position="685"/>
        <end position="688"/>
    </location>
</feature>
<feature type="helix" evidence="26">
    <location>
        <begin position="690"/>
        <end position="693"/>
    </location>
</feature>
<comment type="function">
    <text evidence="1 5 10 11 12 13 14 15">Involved in mRNA degradation. Catalyzes the phosphorolysis of single-stranded polyribonucleotides processively in the 3'- to 5'-direction. Also involved, along with RNase II, in tRNA processing. RNases II and R contribute to rRNA degradation during starvation, while RNase R and PNPase are the major contributors to quality control of rRNA during steady state growth (PubMed:21135037). Contributes to degradation of some small RNAs (sRNA) (PubMed:34210798).</text>
</comment>
<comment type="catalytic activity">
    <reaction evidence="1 5 10 14">
        <text>RNA(n+1) + phosphate = RNA(n) + a ribonucleoside 5'-diphosphate</text>
        <dbReference type="Rhea" id="RHEA:22096"/>
        <dbReference type="Rhea" id="RHEA-COMP:14527"/>
        <dbReference type="Rhea" id="RHEA-COMP:17342"/>
        <dbReference type="ChEBI" id="CHEBI:43474"/>
        <dbReference type="ChEBI" id="CHEBI:57930"/>
        <dbReference type="ChEBI" id="CHEBI:140395"/>
        <dbReference type="EC" id="2.7.7.8"/>
    </reaction>
</comment>
<comment type="cofactor">
    <cofactor evidence="1 11">
        <name>Mg(2+)</name>
        <dbReference type="ChEBI" id="CHEBI:18420"/>
    </cofactor>
    <cofactor evidence="1 11">
        <name>Mn(2+)</name>
        <dbReference type="ChEBI" id="CHEBI:29035"/>
    </cofactor>
    <text evidence="1 11">Magnesium. Can also use manganese.</text>
</comment>
<comment type="subunit">
    <text evidence="1 3 6 9 10 11 17 20">Component of the RNA degradosome, which is a multiprotein complex involved in RNA processing and mRNA degradation. Interacts with RNase E (rne). Homotrimer. The homotrimer forms a ring-like structure with a central channel, where RNA molecules can bind. RNA molecules bind between neighboring subunits. Might interact with YicC (Probable) (PubMed:34210798).</text>
</comment>
<comment type="interaction">
    <interactant intactId="EBI-548080">
        <id>P05055</id>
    </interactant>
    <interactant intactId="EBI-548080">
        <id>P05055</id>
        <label>pnp</label>
    </interactant>
    <organismsDiffer>false</organismsDiffer>
    <experiments>2</experiments>
</comment>
<comment type="interaction">
    <interactant intactId="EBI-548080">
        <id>P05055</id>
    </interactant>
    <interactant intactId="EBI-555806">
        <id>P0A8J8</id>
        <label>rhlB</label>
    </interactant>
    <organismsDiffer>false</organismsDiffer>
    <experiments>8</experiments>
</comment>
<comment type="interaction">
    <interactant intactId="EBI-548080">
        <id>P05055</id>
    </interactant>
    <interactant intactId="EBI-549958">
        <id>P21513</id>
        <label>rne</label>
    </interactant>
    <organismsDiffer>false</organismsDiffer>
    <experiments>13</experiments>
</comment>
<comment type="interaction">
    <interactant intactId="EBI-548080">
        <id>P05055</id>
    </interactant>
    <interactant intactId="EBI-546628">
        <id>P21507</id>
        <label>srmB</label>
    </interactant>
    <organismsDiffer>false</organismsDiffer>
    <experiments>3</experiments>
</comment>
<comment type="subcellular location">
    <subcellularLocation>
        <location evidence="1 7">Cytoplasm</location>
    </subcellularLocation>
    <text>Has also been isolated in association with the inner membrane.</text>
</comment>
<comment type="induction">
    <text evidence="4 8 16">Expression is negatively autoregulated at the translational level via an RNase III-dependent mechanism. Induced by cold shock (42 to 15 degrees Celsius) (at protein level) (PubMed:8898389). At low temperature, the destabilizing effect of PNPase on its own mRNA is less efficient, leading to a decrease in repression and an increase in the expression level.</text>
</comment>
<comment type="domain">
    <text evidence="10">The S1 motif domain is important for trimerization and RNA-binding.</text>
</comment>
<comment type="disruption phenotype">
    <text evidence="13">Decreased growth.</text>
</comment>
<comment type="similarity">
    <text evidence="1">Belongs to the polyribonucleotide nucleotidyltransferase family.</text>
</comment>
<comment type="sequence caution" evidence="18">
    <conflict type="erroneous initiation">
        <sequence resource="EMBL-CDS" id="AAA57967"/>
    </conflict>
    <text>Extended N-terminus.</text>
</comment>
<comment type="sequence caution" evidence="18">
    <conflict type="erroneous initiation">
        <sequence resource="EMBL-CDS" id="BAE77210"/>
    </conflict>
    <text>Extended N-terminus.</text>
</comment>
<protein>
    <recommendedName>
        <fullName evidence="1">Polyribonucleotide nucleotidyltransferase</fullName>
        <ecNumber evidence="1 5 10 14">2.7.7.8</ecNumber>
    </recommendedName>
    <alternativeName>
        <fullName evidence="1">Polynucleotide phosphorylase</fullName>
        <shortName evidence="1">PNPase</shortName>
    </alternativeName>
</protein>
<evidence type="ECO:0000255" key="1">
    <source>
        <dbReference type="HAMAP-Rule" id="MF_01595"/>
    </source>
</evidence>
<evidence type="ECO:0000256" key="2">
    <source>
        <dbReference type="SAM" id="MobiDB-lite"/>
    </source>
</evidence>
<evidence type="ECO:0000269" key="3">
    <source>
    </source>
</evidence>
<evidence type="ECO:0000269" key="4">
    <source>
    </source>
</evidence>
<evidence type="ECO:0000269" key="5">
    <source>
    </source>
</evidence>
<evidence type="ECO:0000269" key="6">
    <source>
    </source>
</evidence>
<evidence type="ECO:0000269" key="7">
    <source>
    </source>
</evidence>
<evidence type="ECO:0000269" key="8">
    <source>
    </source>
</evidence>
<evidence type="ECO:0000269" key="9">
    <source>
    </source>
</evidence>
<evidence type="ECO:0000269" key="10">
    <source>
    </source>
</evidence>
<evidence type="ECO:0000269" key="11">
    <source>
    </source>
</evidence>
<evidence type="ECO:0000269" key="12">
    <source>
    </source>
</evidence>
<evidence type="ECO:0000269" key="13">
    <source>
    </source>
</evidence>
<evidence type="ECO:0000269" key="14">
    <source>
    </source>
</evidence>
<evidence type="ECO:0000269" key="15">
    <source>
    </source>
</evidence>
<evidence type="ECO:0000269" key="16">
    <source>
    </source>
</evidence>
<evidence type="ECO:0000269" key="17">
    <source>
    </source>
</evidence>
<evidence type="ECO:0000305" key="18"/>
<evidence type="ECO:0000305" key="19">
    <source>
    </source>
</evidence>
<evidence type="ECO:0000305" key="20">
    <source>
    </source>
</evidence>
<evidence type="ECO:0007829" key="21">
    <source>
        <dbReference type="PDB" id="3CDI"/>
    </source>
</evidence>
<evidence type="ECO:0007829" key="22">
    <source>
        <dbReference type="PDB" id="3CDJ"/>
    </source>
</evidence>
<evidence type="ECO:0007829" key="23">
    <source>
        <dbReference type="PDB" id="6QH2"/>
    </source>
</evidence>
<evidence type="ECO:0007829" key="24">
    <source>
        <dbReference type="PDB" id="7OGK"/>
    </source>
</evidence>
<evidence type="ECO:0007829" key="25">
    <source>
        <dbReference type="PDB" id="7OGL"/>
    </source>
</evidence>
<evidence type="ECO:0007829" key="26">
    <source>
        <dbReference type="PDB" id="8VAH"/>
    </source>
</evidence>
<evidence type="ECO:0007829" key="27">
    <source>
        <dbReference type="PDB" id="8VAK"/>
    </source>
</evidence>
<organism>
    <name type="scientific">Escherichia coli (strain K12)</name>
    <dbReference type="NCBI Taxonomy" id="83333"/>
    <lineage>
        <taxon>Bacteria</taxon>
        <taxon>Pseudomonadati</taxon>
        <taxon>Pseudomonadota</taxon>
        <taxon>Gammaproteobacteria</taxon>
        <taxon>Enterobacterales</taxon>
        <taxon>Enterobacteriaceae</taxon>
        <taxon>Escherichia</taxon>
    </lineage>
</organism>
<proteinExistence type="evidence at protein level"/>
<dbReference type="EC" id="2.7.7.8" evidence="1 5 10 14"/>
<dbReference type="EMBL" id="J02638">
    <property type="protein sequence ID" value="AAA83905.1"/>
    <property type="molecule type" value="Genomic_DNA"/>
</dbReference>
<dbReference type="EMBL" id="U18997">
    <property type="protein sequence ID" value="AAA57967.1"/>
    <property type="status" value="ALT_INIT"/>
    <property type="molecule type" value="Genomic_DNA"/>
</dbReference>
<dbReference type="EMBL" id="U00096">
    <property type="protein sequence ID" value="AAC76198.2"/>
    <property type="molecule type" value="Genomic_DNA"/>
</dbReference>
<dbReference type="EMBL" id="AP009048">
    <property type="protein sequence ID" value="BAE77210.1"/>
    <property type="status" value="ALT_INIT"/>
    <property type="molecule type" value="Genomic_DNA"/>
</dbReference>
<dbReference type="EMBL" id="X00761">
    <property type="protein sequence ID" value="CAA25332.1"/>
    <property type="molecule type" value="Genomic_DNA"/>
</dbReference>
<dbReference type="EMBL" id="M14425">
    <property type="protein sequence ID" value="AAA24596.1"/>
    <property type="molecule type" value="Genomic_DNA"/>
</dbReference>
<dbReference type="PIR" id="H65106">
    <property type="entry name" value="H65106"/>
</dbReference>
<dbReference type="RefSeq" id="NP_417633.4">
    <property type="nucleotide sequence ID" value="NC_000913.3"/>
</dbReference>
<dbReference type="RefSeq" id="WP_001295554.1">
    <property type="nucleotide sequence ID" value="NZ_LN832404.1"/>
</dbReference>
<dbReference type="PDB" id="1SRO">
    <property type="method" value="NMR"/>
    <property type="chains" value="A=617-692"/>
</dbReference>
<dbReference type="PDB" id="3CDI">
    <property type="method" value="X-ray"/>
    <property type="resolution" value="2.60 A"/>
    <property type="chains" value="A=2-711"/>
</dbReference>
<dbReference type="PDB" id="3CDJ">
    <property type="method" value="X-ray"/>
    <property type="resolution" value="2.80 A"/>
    <property type="chains" value="A=2-547"/>
</dbReference>
<dbReference type="PDB" id="3GCM">
    <property type="method" value="X-ray"/>
    <property type="resolution" value="2.50 A"/>
    <property type="chains" value="A/B/C=1-549"/>
</dbReference>
<dbReference type="PDB" id="3GLL">
    <property type="method" value="X-ray"/>
    <property type="resolution" value="2.70 A"/>
    <property type="chains" value="A=1-549"/>
</dbReference>
<dbReference type="PDB" id="3GME">
    <property type="method" value="X-ray"/>
    <property type="resolution" value="2.40 A"/>
    <property type="chains" value="A=1-549"/>
</dbReference>
<dbReference type="PDB" id="3H1C">
    <property type="method" value="X-ray"/>
    <property type="resolution" value="3.57 A"/>
    <property type="chains" value="A/B/C/G/I/K/M/O/R/T/V/X=1-549"/>
</dbReference>
<dbReference type="PDB" id="6QH2">
    <property type="method" value="NMR"/>
    <property type="chains" value="A=545-711"/>
</dbReference>
<dbReference type="PDB" id="7OGK">
    <property type="method" value="EM"/>
    <property type="resolution" value="3.40 A"/>
    <property type="chains" value="A/B/C=1-711"/>
</dbReference>
<dbReference type="PDB" id="7OGL">
    <property type="method" value="EM"/>
    <property type="resolution" value="3.40 A"/>
    <property type="chains" value="A/B/C=1-711"/>
</dbReference>
<dbReference type="PDB" id="7OGM">
    <property type="method" value="EM"/>
    <property type="resolution" value="3.70 A"/>
    <property type="chains" value="L/N/O=1-711"/>
</dbReference>
<dbReference type="PDB" id="8VAH">
    <property type="method" value="EM"/>
    <property type="resolution" value="3.15 A"/>
    <property type="chains" value="A/B/C=1-711"/>
</dbReference>
<dbReference type="PDB" id="8VAK">
    <property type="method" value="EM"/>
    <property type="resolution" value="3.30 A"/>
    <property type="chains" value="A/B/C=1-711"/>
</dbReference>
<dbReference type="PDBsum" id="1SRO"/>
<dbReference type="PDBsum" id="3CDI"/>
<dbReference type="PDBsum" id="3CDJ"/>
<dbReference type="PDBsum" id="3GCM"/>
<dbReference type="PDBsum" id="3GLL"/>
<dbReference type="PDBsum" id="3GME"/>
<dbReference type="PDBsum" id="3H1C"/>
<dbReference type="PDBsum" id="6QH2"/>
<dbReference type="PDBsum" id="7OGK"/>
<dbReference type="PDBsum" id="7OGL"/>
<dbReference type="PDBsum" id="7OGM"/>
<dbReference type="PDBsum" id="8VAH"/>
<dbReference type="PDBsum" id="8VAK"/>
<dbReference type="EMDB" id="EMD-12882"/>
<dbReference type="EMDB" id="EMD-12883"/>
<dbReference type="EMDB" id="EMD-12884"/>
<dbReference type="SMR" id="P05055"/>
<dbReference type="BioGRID" id="4262431">
    <property type="interactions" value="102"/>
</dbReference>
<dbReference type="BioGRID" id="851985">
    <property type="interactions" value="1"/>
</dbReference>
<dbReference type="ComplexPortal" id="CPX-403">
    <property type="entry name" value="RNA degradosome"/>
</dbReference>
<dbReference type="DIP" id="DIP-10522N"/>
<dbReference type="FunCoup" id="P05055">
    <property type="interactions" value="810"/>
</dbReference>
<dbReference type="IntAct" id="P05055">
    <property type="interactions" value="45"/>
</dbReference>
<dbReference type="MINT" id="P05055"/>
<dbReference type="STRING" id="511145.b3164"/>
<dbReference type="CarbonylDB" id="P05055"/>
<dbReference type="jPOST" id="P05055"/>
<dbReference type="PaxDb" id="511145-b3164"/>
<dbReference type="EnsemblBacteria" id="AAC76198">
    <property type="protein sequence ID" value="AAC76198"/>
    <property type="gene ID" value="b3164"/>
</dbReference>
<dbReference type="GeneID" id="947672"/>
<dbReference type="KEGG" id="ecj:JW5851"/>
<dbReference type="KEGG" id="eco:b3164"/>
<dbReference type="KEGG" id="ecoc:C3026_17235"/>
<dbReference type="PATRIC" id="fig|1411691.4.peg.3566"/>
<dbReference type="EchoBASE" id="EB0736"/>
<dbReference type="eggNOG" id="COG1185">
    <property type="taxonomic scope" value="Bacteria"/>
</dbReference>
<dbReference type="HOGENOM" id="CLU_004217_2_2_6"/>
<dbReference type="InParanoid" id="P05055"/>
<dbReference type="OMA" id="RFMFHYN"/>
<dbReference type="OrthoDB" id="9804305at2"/>
<dbReference type="PhylomeDB" id="P05055"/>
<dbReference type="BioCyc" id="EcoCyc:EG10743-MONOMER"/>
<dbReference type="BioCyc" id="MetaCyc:EG10743-MONOMER"/>
<dbReference type="BRENDA" id="2.7.7.8">
    <property type="organism ID" value="2026"/>
</dbReference>
<dbReference type="EvolutionaryTrace" id="P05055"/>
<dbReference type="PRO" id="PR:P05055"/>
<dbReference type="Proteomes" id="UP000000625">
    <property type="component" value="Chromosome"/>
</dbReference>
<dbReference type="GO" id="GO:1990061">
    <property type="term" value="C:bacterial degradosome"/>
    <property type="evidence" value="ECO:0000353"/>
    <property type="project" value="ComplexPortal"/>
</dbReference>
<dbReference type="GO" id="GO:0005829">
    <property type="term" value="C:cytosol"/>
    <property type="evidence" value="ECO:0000314"/>
    <property type="project" value="EcoCyc"/>
</dbReference>
<dbReference type="GO" id="GO:0016020">
    <property type="term" value="C:membrane"/>
    <property type="evidence" value="ECO:0000314"/>
    <property type="project" value="ComplexPortal"/>
</dbReference>
<dbReference type="GO" id="GO:0000175">
    <property type="term" value="F:3'-5'-RNA exonuclease activity"/>
    <property type="evidence" value="ECO:0000314"/>
    <property type="project" value="EcoCyc"/>
</dbReference>
<dbReference type="GO" id="GO:0035438">
    <property type="term" value="F:cyclic-di-GMP binding"/>
    <property type="evidence" value="ECO:0000314"/>
    <property type="project" value="EcoCyc"/>
</dbReference>
<dbReference type="GO" id="GO:0042802">
    <property type="term" value="F:identical protein binding"/>
    <property type="evidence" value="ECO:0000353"/>
    <property type="project" value="IntAct"/>
</dbReference>
<dbReference type="GO" id="GO:0000287">
    <property type="term" value="F:magnesium ion binding"/>
    <property type="evidence" value="ECO:0007669"/>
    <property type="project" value="UniProtKB-UniRule"/>
</dbReference>
<dbReference type="GO" id="GO:0004654">
    <property type="term" value="F:polyribonucleotide nucleotidyltransferase activity"/>
    <property type="evidence" value="ECO:0000314"/>
    <property type="project" value="EcoCyc"/>
</dbReference>
<dbReference type="GO" id="GO:0003723">
    <property type="term" value="F:RNA binding"/>
    <property type="evidence" value="ECO:0000353"/>
    <property type="project" value="DisProt"/>
</dbReference>
<dbReference type="GO" id="GO:0006402">
    <property type="term" value="P:mRNA catabolic process"/>
    <property type="evidence" value="ECO:0007669"/>
    <property type="project" value="UniProtKB-UniRule"/>
</dbReference>
<dbReference type="GO" id="GO:0009408">
    <property type="term" value="P:response to heat"/>
    <property type="evidence" value="ECO:0000315"/>
    <property type="project" value="EcoCyc"/>
</dbReference>
<dbReference type="GO" id="GO:0006401">
    <property type="term" value="P:RNA catabolic process"/>
    <property type="evidence" value="ECO:0000318"/>
    <property type="project" value="GO_Central"/>
</dbReference>
<dbReference type="GO" id="GO:0006396">
    <property type="term" value="P:RNA processing"/>
    <property type="evidence" value="ECO:0000303"/>
    <property type="project" value="ComplexPortal"/>
</dbReference>
<dbReference type="CDD" id="cd02393">
    <property type="entry name" value="KH-I_PNPase"/>
    <property type="match status" value="1"/>
</dbReference>
<dbReference type="CDD" id="cd11363">
    <property type="entry name" value="RNase_PH_PNPase_1"/>
    <property type="match status" value="1"/>
</dbReference>
<dbReference type="CDD" id="cd11364">
    <property type="entry name" value="RNase_PH_PNPase_2"/>
    <property type="match status" value="1"/>
</dbReference>
<dbReference type="CDD" id="cd04472">
    <property type="entry name" value="S1_PNPase"/>
    <property type="match status" value="1"/>
</dbReference>
<dbReference type="FunFam" id="2.40.50.140:FF:000023">
    <property type="entry name" value="Polyribonucleotide nucleotidyltransferase"/>
    <property type="match status" value="1"/>
</dbReference>
<dbReference type="FunFam" id="3.30.1370.10:FF:000001">
    <property type="entry name" value="Polyribonucleotide nucleotidyltransferase"/>
    <property type="match status" value="1"/>
</dbReference>
<dbReference type="FunFam" id="3.30.230.70:FF:000001">
    <property type="entry name" value="Polyribonucleotide nucleotidyltransferase"/>
    <property type="match status" value="1"/>
</dbReference>
<dbReference type="FunFam" id="3.30.230.70:FF:000002">
    <property type="entry name" value="Polyribonucleotide nucleotidyltransferase"/>
    <property type="match status" value="1"/>
</dbReference>
<dbReference type="Gene3D" id="3.30.230.70">
    <property type="entry name" value="GHMP Kinase, N-terminal domain"/>
    <property type="match status" value="2"/>
</dbReference>
<dbReference type="Gene3D" id="3.30.1370.10">
    <property type="entry name" value="K Homology domain, type 1"/>
    <property type="match status" value="1"/>
</dbReference>
<dbReference type="Gene3D" id="2.40.50.140">
    <property type="entry name" value="Nucleic acid-binding proteins"/>
    <property type="match status" value="1"/>
</dbReference>
<dbReference type="HAMAP" id="MF_01595">
    <property type="entry name" value="PNPase"/>
    <property type="match status" value="1"/>
</dbReference>
<dbReference type="InterPro" id="IPR001247">
    <property type="entry name" value="ExoRNase_PH_dom1"/>
</dbReference>
<dbReference type="InterPro" id="IPR015847">
    <property type="entry name" value="ExoRNase_PH_dom2"/>
</dbReference>
<dbReference type="InterPro" id="IPR036345">
    <property type="entry name" value="ExoRNase_PH_dom2_sf"/>
</dbReference>
<dbReference type="InterPro" id="IPR004087">
    <property type="entry name" value="KH_dom"/>
</dbReference>
<dbReference type="InterPro" id="IPR004088">
    <property type="entry name" value="KH_dom_type_1"/>
</dbReference>
<dbReference type="InterPro" id="IPR036612">
    <property type="entry name" value="KH_dom_type_1_sf"/>
</dbReference>
<dbReference type="InterPro" id="IPR012340">
    <property type="entry name" value="NA-bd_OB-fold"/>
</dbReference>
<dbReference type="InterPro" id="IPR012162">
    <property type="entry name" value="PNPase"/>
</dbReference>
<dbReference type="InterPro" id="IPR027408">
    <property type="entry name" value="PNPase/RNase_PH_dom_sf"/>
</dbReference>
<dbReference type="InterPro" id="IPR015848">
    <property type="entry name" value="PNPase_PH_RNA-bd_bac/org-type"/>
</dbReference>
<dbReference type="InterPro" id="IPR036456">
    <property type="entry name" value="PNPase_PH_RNA-bd_sf"/>
</dbReference>
<dbReference type="InterPro" id="IPR020568">
    <property type="entry name" value="Ribosomal_Su5_D2-typ_SF"/>
</dbReference>
<dbReference type="InterPro" id="IPR003029">
    <property type="entry name" value="S1_domain"/>
</dbReference>
<dbReference type="NCBIfam" id="TIGR03591">
    <property type="entry name" value="polynuc_phos"/>
    <property type="match status" value="1"/>
</dbReference>
<dbReference type="NCBIfam" id="NF008805">
    <property type="entry name" value="PRK11824.1"/>
    <property type="match status" value="1"/>
</dbReference>
<dbReference type="PANTHER" id="PTHR11252">
    <property type="entry name" value="POLYRIBONUCLEOTIDE NUCLEOTIDYLTRANSFERASE"/>
    <property type="match status" value="1"/>
</dbReference>
<dbReference type="PANTHER" id="PTHR11252:SF0">
    <property type="entry name" value="POLYRIBONUCLEOTIDE NUCLEOTIDYLTRANSFERASE 1, MITOCHONDRIAL"/>
    <property type="match status" value="1"/>
</dbReference>
<dbReference type="Pfam" id="PF00013">
    <property type="entry name" value="KH_1"/>
    <property type="match status" value="1"/>
</dbReference>
<dbReference type="Pfam" id="PF03726">
    <property type="entry name" value="PNPase"/>
    <property type="match status" value="1"/>
</dbReference>
<dbReference type="Pfam" id="PF01138">
    <property type="entry name" value="RNase_PH"/>
    <property type="match status" value="2"/>
</dbReference>
<dbReference type="Pfam" id="PF03725">
    <property type="entry name" value="RNase_PH_C"/>
    <property type="match status" value="2"/>
</dbReference>
<dbReference type="Pfam" id="PF00575">
    <property type="entry name" value="S1"/>
    <property type="match status" value="1"/>
</dbReference>
<dbReference type="PIRSF" id="PIRSF005499">
    <property type="entry name" value="PNPase"/>
    <property type="match status" value="1"/>
</dbReference>
<dbReference type="SMART" id="SM00322">
    <property type="entry name" value="KH"/>
    <property type="match status" value="1"/>
</dbReference>
<dbReference type="SMART" id="SM00316">
    <property type="entry name" value="S1"/>
    <property type="match status" value="1"/>
</dbReference>
<dbReference type="SUPFAM" id="SSF54791">
    <property type="entry name" value="Eukaryotic type KH-domain (KH-domain type I)"/>
    <property type="match status" value="1"/>
</dbReference>
<dbReference type="SUPFAM" id="SSF50249">
    <property type="entry name" value="Nucleic acid-binding proteins"/>
    <property type="match status" value="1"/>
</dbReference>
<dbReference type="SUPFAM" id="SSF46915">
    <property type="entry name" value="Polynucleotide phosphorylase/guanosine pentaphosphate synthase (PNPase/GPSI), domain 3"/>
    <property type="match status" value="1"/>
</dbReference>
<dbReference type="SUPFAM" id="SSF55666">
    <property type="entry name" value="Ribonuclease PH domain 2-like"/>
    <property type="match status" value="2"/>
</dbReference>
<dbReference type="SUPFAM" id="SSF54211">
    <property type="entry name" value="Ribosomal protein S5 domain 2-like"/>
    <property type="match status" value="2"/>
</dbReference>
<dbReference type="PROSITE" id="PS50084">
    <property type="entry name" value="KH_TYPE_1"/>
    <property type="match status" value="1"/>
</dbReference>
<dbReference type="PROSITE" id="PS50126">
    <property type="entry name" value="S1"/>
    <property type="match status" value="1"/>
</dbReference>